<gene>
    <name evidence="1" type="primary">proA</name>
    <name type="ordered locus">Tola_0811</name>
</gene>
<organism>
    <name type="scientific">Tolumonas auensis (strain DSM 9187 / NBRC 110442 / TA 4)</name>
    <dbReference type="NCBI Taxonomy" id="595494"/>
    <lineage>
        <taxon>Bacteria</taxon>
        <taxon>Pseudomonadati</taxon>
        <taxon>Pseudomonadota</taxon>
        <taxon>Gammaproteobacteria</taxon>
        <taxon>Aeromonadales</taxon>
        <taxon>Aeromonadaceae</taxon>
        <taxon>Tolumonas</taxon>
    </lineage>
</organism>
<protein>
    <recommendedName>
        <fullName evidence="1">Gamma-glutamyl phosphate reductase</fullName>
        <shortName evidence="1">GPR</shortName>
        <ecNumber evidence="1">1.2.1.41</ecNumber>
    </recommendedName>
    <alternativeName>
        <fullName evidence="1">Glutamate-5-semialdehyde dehydrogenase</fullName>
    </alternativeName>
    <alternativeName>
        <fullName evidence="1">Glutamyl-gamma-semialdehyde dehydrogenase</fullName>
        <shortName evidence="1">GSA dehydrogenase</shortName>
    </alternativeName>
</protein>
<reference key="1">
    <citation type="submission" date="2009-05" db="EMBL/GenBank/DDBJ databases">
        <title>Complete sequence of Tolumonas auensis DSM 9187.</title>
        <authorList>
            <consortium name="US DOE Joint Genome Institute"/>
            <person name="Lucas S."/>
            <person name="Copeland A."/>
            <person name="Lapidus A."/>
            <person name="Glavina del Rio T."/>
            <person name="Tice H."/>
            <person name="Bruce D."/>
            <person name="Goodwin L."/>
            <person name="Pitluck S."/>
            <person name="Chertkov O."/>
            <person name="Brettin T."/>
            <person name="Detter J.C."/>
            <person name="Han C."/>
            <person name="Larimer F."/>
            <person name="Land M."/>
            <person name="Hauser L."/>
            <person name="Kyrpides N."/>
            <person name="Mikhailova N."/>
            <person name="Spring S."/>
            <person name="Beller H."/>
        </authorList>
    </citation>
    <scope>NUCLEOTIDE SEQUENCE [LARGE SCALE GENOMIC DNA]</scope>
    <source>
        <strain>DSM 9187 / NBRC 110442 / TA 4</strain>
    </source>
</reference>
<proteinExistence type="inferred from homology"/>
<dbReference type="EC" id="1.2.1.41" evidence="1"/>
<dbReference type="EMBL" id="CP001616">
    <property type="protein sequence ID" value="ACQ92439.1"/>
    <property type="molecule type" value="Genomic_DNA"/>
</dbReference>
<dbReference type="RefSeq" id="WP_012729038.1">
    <property type="nucleotide sequence ID" value="NC_012691.1"/>
</dbReference>
<dbReference type="SMR" id="C4LBK4"/>
<dbReference type="STRING" id="595494.Tola_0811"/>
<dbReference type="KEGG" id="tau:Tola_0811"/>
<dbReference type="eggNOG" id="COG0014">
    <property type="taxonomic scope" value="Bacteria"/>
</dbReference>
<dbReference type="HOGENOM" id="CLU_030231_0_0_6"/>
<dbReference type="OrthoDB" id="9809970at2"/>
<dbReference type="UniPathway" id="UPA00098">
    <property type="reaction ID" value="UER00360"/>
</dbReference>
<dbReference type="Proteomes" id="UP000009073">
    <property type="component" value="Chromosome"/>
</dbReference>
<dbReference type="GO" id="GO:0005737">
    <property type="term" value="C:cytoplasm"/>
    <property type="evidence" value="ECO:0007669"/>
    <property type="project" value="UniProtKB-SubCell"/>
</dbReference>
<dbReference type="GO" id="GO:0004350">
    <property type="term" value="F:glutamate-5-semialdehyde dehydrogenase activity"/>
    <property type="evidence" value="ECO:0007669"/>
    <property type="project" value="UniProtKB-UniRule"/>
</dbReference>
<dbReference type="GO" id="GO:0050661">
    <property type="term" value="F:NADP binding"/>
    <property type="evidence" value="ECO:0007669"/>
    <property type="project" value="InterPro"/>
</dbReference>
<dbReference type="GO" id="GO:0055129">
    <property type="term" value="P:L-proline biosynthetic process"/>
    <property type="evidence" value="ECO:0007669"/>
    <property type="project" value="UniProtKB-UniRule"/>
</dbReference>
<dbReference type="CDD" id="cd07079">
    <property type="entry name" value="ALDH_F18-19_ProA-GPR"/>
    <property type="match status" value="1"/>
</dbReference>
<dbReference type="FunFam" id="3.40.309.10:FF:000006">
    <property type="entry name" value="Gamma-glutamyl phosphate reductase"/>
    <property type="match status" value="1"/>
</dbReference>
<dbReference type="Gene3D" id="3.40.605.10">
    <property type="entry name" value="Aldehyde Dehydrogenase, Chain A, domain 1"/>
    <property type="match status" value="1"/>
</dbReference>
<dbReference type="Gene3D" id="3.40.309.10">
    <property type="entry name" value="Aldehyde Dehydrogenase, Chain A, domain 2"/>
    <property type="match status" value="1"/>
</dbReference>
<dbReference type="HAMAP" id="MF_00412">
    <property type="entry name" value="ProA"/>
    <property type="match status" value="1"/>
</dbReference>
<dbReference type="InterPro" id="IPR016161">
    <property type="entry name" value="Ald_DH/histidinol_DH"/>
</dbReference>
<dbReference type="InterPro" id="IPR016163">
    <property type="entry name" value="Ald_DH_C"/>
</dbReference>
<dbReference type="InterPro" id="IPR016162">
    <property type="entry name" value="Ald_DH_N"/>
</dbReference>
<dbReference type="InterPro" id="IPR015590">
    <property type="entry name" value="Aldehyde_DH_dom"/>
</dbReference>
<dbReference type="InterPro" id="IPR012134">
    <property type="entry name" value="Glu-5-SA_DH"/>
</dbReference>
<dbReference type="InterPro" id="IPR000965">
    <property type="entry name" value="GPR_dom"/>
</dbReference>
<dbReference type="NCBIfam" id="NF001221">
    <property type="entry name" value="PRK00197.1"/>
    <property type="match status" value="1"/>
</dbReference>
<dbReference type="NCBIfam" id="TIGR00407">
    <property type="entry name" value="proA"/>
    <property type="match status" value="1"/>
</dbReference>
<dbReference type="PANTHER" id="PTHR11063:SF8">
    <property type="entry name" value="DELTA-1-PYRROLINE-5-CARBOXYLATE SYNTHASE"/>
    <property type="match status" value="1"/>
</dbReference>
<dbReference type="PANTHER" id="PTHR11063">
    <property type="entry name" value="GLUTAMATE SEMIALDEHYDE DEHYDROGENASE"/>
    <property type="match status" value="1"/>
</dbReference>
<dbReference type="Pfam" id="PF00171">
    <property type="entry name" value="Aldedh"/>
    <property type="match status" value="1"/>
</dbReference>
<dbReference type="PIRSF" id="PIRSF000151">
    <property type="entry name" value="GPR"/>
    <property type="match status" value="1"/>
</dbReference>
<dbReference type="SUPFAM" id="SSF53720">
    <property type="entry name" value="ALDH-like"/>
    <property type="match status" value="1"/>
</dbReference>
<name>PROA_TOLAT</name>
<keyword id="KW-0028">Amino-acid biosynthesis</keyword>
<keyword id="KW-0963">Cytoplasm</keyword>
<keyword id="KW-0521">NADP</keyword>
<keyword id="KW-0560">Oxidoreductase</keyword>
<keyword id="KW-0641">Proline biosynthesis</keyword>
<keyword id="KW-1185">Reference proteome</keyword>
<evidence type="ECO:0000255" key="1">
    <source>
        <dbReference type="HAMAP-Rule" id="MF_00412"/>
    </source>
</evidence>
<sequence>MSLLAMGKAAREASFELAVAATARKNQALLAMAEELELQQDVILAANAKDIEAGRSSGLTDAMLDRLLLNESRLAGIVADVRKVVTLDDPVGSEIDSRVLENGMRLSRRRVPIGVIGVIYEARPNVTIDIAALCLKTGNASILRGGRETFNSNMALVKVIQAALAKTGLPAASVQYIESPDRALVSELLTMDQYVDMIIPRGGANLHRLCKDQSTIPVIIGGFGVSHLYVDESADLIRAIDVIDNAKVQRPSACNSLDTLLLNEKIAAEIVPALVARMNQQKVTLVAEPKAFALLQAAGAEQLRAAGAEDFDTEWLSLTLGVKVVADVKAAIAHLQEHNACHSDAILTNDLKCAEYFINAAGSAAVYVNASTRFTDGAQFGLGAEVAVSTQKLHARGPMGLTELTSYKWIGQADYLSRS</sequence>
<comment type="function">
    <text evidence="1">Catalyzes the NADPH-dependent reduction of L-glutamate 5-phosphate into L-glutamate 5-semialdehyde and phosphate. The product spontaneously undergoes cyclization to form 1-pyrroline-5-carboxylate.</text>
</comment>
<comment type="catalytic activity">
    <reaction evidence="1">
        <text>L-glutamate 5-semialdehyde + phosphate + NADP(+) = L-glutamyl 5-phosphate + NADPH + H(+)</text>
        <dbReference type="Rhea" id="RHEA:19541"/>
        <dbReference type="ChEBI" id="CHEBI:15378"/>
        <dbReference type="ChEBI" id="CHEBI:43474"/>
        <dbReference type="ChEBI" id="CHEBI:57783"/>
        <dbReference type="ChEBI" id="CHEBI:58066"/>
        <dbReference type="ChEBI" id="CHEBI:58274"/>
        <dbReference type="ChEBI" id="CHEBI:58349"/>
        <dbReference type="EC" id="1.2.1.41"/>
    </reaction>
</comment>
<comment type="pathway">
    <text evidence="1">Amino-acid biosynthesis; L-proline biosynthesis; L-glutamate 5-semialdehyde from L-glutamate: step 2/2.</text>
</comment>
<comment type="subcellular location">
    <subcellularLocation>
        <location evidence="1">Cytoplasm</location>
    </subcellularLocation>
</comment>
<comment type="similarity">
    <text evidence="1">Belongs to the gamma-glutamyl phosphate reductase family.</text>
</comment>
<feature type="chain" id="PRO_1000206004" description="Gamma-glutamyl phosphate reductase">
    <location>
        <begin position="1"/>
        <end position="419"/>
    </location>
</feature>
<accession>C4LBK4</accession>